<reference key="1">
    <citation type="journal article" date="2009" name="Proc. Natl. Acad. Sci. U.S.A.">
        <title>Biogeography of the Sulfolobus islandicus pan-genome.</title>
        <authorList>
            <person name="Reno M.L."/>
            <person name="Held N.L."/>
            <person name="Fields C.J."/>
            <person name="Burke P.V."/>
            <person name="Whitaker R.J."/>
        </authorList>
    </citation>
    <scope>NUCLEOTIDE SEQUENCE [LARGE SCALE GENOMIC DNA]</scope>
    <source>
        <strain>Y.G.57.14 / Yellowstone #1</strain>
    </source>
</reference>
<feature type="chain" id="PRO_1000203774" description="Serine--tRNA ligase">
    <location>
        <begin position="1"/>
        <end position="457"/>
    </location>
</feature>
<feature type="binding site" evidence="1">
    <location>
        <begin position="252"/>
        <end position="254"/>
    </location>
    <ligand>
        <name>L-serine</name>
        <dbReference type="ChEBI" id="CHEBI:33384"/>
    </ligand>
</feature>
<feature type="binding site" evidence="1">
    <location>
        <begin position="283"/>
        <end position="285"/>
    </location>
    <ligand>
        <name>ATP</name>
        <dbReference type="ChEBI" id="CHEBI:30616"/>
    </ligand>
</feature>
<feature type="binding site" evidence="1">
    <location>
        <position position="299"/>
    </location>
    <ligand>
        <name>ATP</name>
        <dbReference type="ChEBI" id="CHEBI:30616"/>
    </ligand>
</feature>
<feature type="binding site" evidence="1">
    <location>
        <position position="306"/>
    </location>
    <ligand>
        <name>L-serine</name>
        <dbReference type="ChEBI" id="CHEBI:33384"/>
    </ligand>
</feature>
<feature type="binding site" evidence="1">
    <location>
        <begin position="370"/>
        <end position="373"/>
    </location>
    <ligand>
        <name>ATP</name>
        <dbReference type="ChEBI" id="CHEBI:30616"/>
    </ligand>
</feature>
<feature type="binding site" evidence="1">
    <location>
        <position position="406"/>
    </location>
    <ligand>
        <name>L-serine</name>
        <dbReference type="ChEBI" id="CHEBI:33384"/>
    </ligand>
</feature>
<name>SYS_SACI7</name>
<protein>
    <recommendedName>
        <fullName evidence="1">Serine--tRNA ligase</fullName>
        <ecNumber evidence="1">6.1.1.11</ecNumber>
    </recommendedName>
    <alternativeName>
        <fullName evidence="1">Seryl-tRNA synthetase</fullName>
        <shortName evidence="1">SerRS</shortName>
    </alternativeName>
    <alternativeName>
        <fullName evidence="1">Seryl-tRNA(Ser/Sec) synthetase</fullName>
    </alternativeName>
</protein>
<accession>C3NEQ7</accession>
<sequence length="457" mass="53230">MSWSILEFLRKNPEELKNNLKRRAIDVSLVDKAVELDKKWRQVLQEVERLRHQHNVLSSQIPKLSGEERKKKIEESKNLLKILEDKEKELEKIEVERDRLLSTLPNLVADDVPNGPDDSYNIPIKFWGKFKVYEGDVEEFLRQTKDANVNYEIIKWKPKGHAEMLEDVLHLGNTLKAAEIAGSRFYYLFNDIVWLDFALLLFAIDYITQQGYTLVLPPYMLRGEVIQSVIDLDTFKDAIYKIENEDLYLIATAEHSIAAMFFKEEIEKDKLPLKFAGISPAFRKEAGAANKDLKGIFRVHQFHKVEQFIFSTPEDSWKYHAELITNAESIFQQLELPYRIVNIASGDLGACAAKKFDLEVWMPAQAKFREMVSCSNCTDWQAFRMKIRYVDRKNNKRGYVHTLNSTAIASTRTITAILENYQREDGVVEVPKVLRKYLEIFPKAPKDYIYPLKNKII</sequence>
<proteinExistence type="inferred from homology"/>
<keyword id="KW-0030">Aminoacyl-tRNA synthetase</keyword>
<keyword id="KW-0067">ATP-binding</keyword>
<keyword id="KW-0963">Cytoplasm</keyword>
<keyword id="KW-0436">Ligase</keyword>
<keyword id="KW-0547">Nucleotide-binding</keyword>
<keyword id="KW-0648">Protein biosynthesis</keyword>
<comment type="function">
    <text evidence="1">Catalyzes the attachment of serine to tRNA(Ser). Is also able to aminoacylate tRNA(Sec) with serine, to form the misacylated tRNA L-seryl-tRNA(Sec), which will be further converted into selenocysteinyl-tRNA(Sec).</text>
</comment>
<comment type="catalytic activity">
    <reaction evidence="1">
        <text>tRNA(Ser) + L-serine + ATP = L-seryl-tRNA(Ser) + AMP + diphosphate + H(+)</text>
        <dbReference type="Rhea" id="RHEA:12292"/>
        <dbReference type="Rhea" id="RHEA-COMP:9669"/>
        <dbReference type="Rhea" id="RHEA-COMP:9703"/>
        <dbReference type="ChEBI" id="CHEBI:15378"/>
        <dbReference type="ChEBI" id="CHEBI:30616"/>
        <dbReference type="ChEBI" id="CHEBI:33019"/>
        <dbReference type="ChEBI" id="CHEBI:33384"/>
        <dbReference type="ChEBI" id="CHEBI:78442"/>
        <dbReference type="ChEBI" id="CHEBI:78533"/>
        <dbReference type="ChEBI" id="CHEBI:456215"/>
        <dbReference type="EC" id="6.1.1.11"/>
    </reaction>
</comment>
<comment type="catalytic activity">
    <reaction evidence="1">
        <text>tRNA(Sec) + L-serine + ATP = L-seryl-tRNA(Sec) + AMP + diphosphate + H(+)</text>
        <dbReference type="Rhea" id="RHEA:42580"/>
        <dbReference type="Rhea" id="RHEA-COMP:9742"/>
        <dbReference type="Rhea" id="RHEA-COMP:10128"/>
        <dbReference type="ChEBI" id="CHEBI:15378"/>
        <dbReference type="ChEBI" id="CHEBI:30616"/>
        <dbReference type="ChEBI" id="CHEBI:33019"/>
        <dbReference type="ChEBI" id="CHEBI:33384"/>
        <dbReference type="ChEBI" id="CHEBI:78442"/>
        <dbReference type="ChEBI" id="CHEBI:78533"/>
        <dbReference type="ChEBI" id="CHEBI:456215"/>
        <dbReference type="EC" id="6.1.1.11"/>
    </reaction>
</comment>
<comment type="pathway">
    <text evidence="1">Aminoacyl-tRNA biosynthesis; selenocysteinyl-tRNA(Sec) biosynthesis; L-seryl-tRNA(Sec) from L-serine and tRNA(Sec): step 1/1.</text>
</comment>
<comment type="subunit">
    <text evidence="1">Homodimer. The tRNA molecule binds across the dimer.</text>
</comment>
<comment type="subcellular location">
    <subcellularLocation>
        <location evidence="1">Cytoplasm</location>
    </subcellularLocation>
</comment>
<comment type="domain">
    <text evidence="1">Consists of two distinct domains, a catalytic core and a N-terminal extension that is involved in tRNA binding.</text>
</comment>
<comment type="similarity">
    <text evidence="1">Belongs to the class-II aminoacyl-tRNA synthetase family. Type-1 seryl-tRNA synthetase subfamily.</text>
</comment>
<organism>
    <name type="scientific">Saccharolobus islandicus (strain Y.G.57.14 / Yellowstone #1)</name>
    <name type="common">Sulfolobus islandicus</name>
    <dbReference type="NCBI Taxonomy" id="439386"/>
    <lineage>
        <taxon>Archaea</taxon>
        <taxon>Thermoproteota</taxon>
        <taxon>Thermoprotei</taxon>
        <taxon>Sulfolobales</taxon>
        <taxon>Sulfolobaceae</taxon>
        <taxon>Saccharolobus</taxon>
    </lineage>
</organism>
<evidence type="ECO:0000255" key="1">
    <source>
        <dbReference type="HAMAP-Rule" id="MF_00176"/>
    </source>
</evidence>
<gene>
    <name evidence="1" type="primary">serS</name>
    <name type="ordered locus">YG5714_1534</name>
</gene>
<dbReference type="EC" id="6.1.1.11" evidence="1"/>
<dbReference type="EMBL" id="CP001403">
    <property type="protein sequence ID" value="ACP45796.1"/>
    <property type="molecule type" value="Genomic_DNA"/>
</dbReference>
<dbReference type="RefSeq" id="WP_012716213.1">
    <property type="nucleotide sequence ID" value="NC_012622.1"/>
</dbReference>
<dbReference type="SMR" id="C3NEQ7"/>
<dbReference type="GeneID" id="7808018"/>
<dbReference type="KEGG" id="siy:YG5714_1534"/>
<dbReference type="HOGENOM" id="CLU_023797_0_1_2"/>
<dbReference type="UniPathway" id="UPA00906">
    <property type="reaction ID" value="UER00895"/>
</dbReference>
<dbReference type="Proteomes" id="UP000002308">
    <property type="component" value="Chromosome"/>
</dbReference>
<dbReference type="GO" id="GO:0005737">
    <property type="term" value="C:cytoplasm"/>
    <property type="evidence" value="ECO:0007669"/>
    <property type="project" value="UniProtKB-SubCell"/>
</dbReference>
<dbReference type="GO" id="GO:0005524">
    <property type="term" value="F:ATP binding"/>
    <property type="evidence" value="ECO:0007669"/>
    <property type="project" value="UniProtKB-UniRule"/>
</dbReference>
<dbReference type="GO" id="GO:0004828">
    <property type="term" value="F:serine-tRNA ligase activity"/>
    <property type="evidence" value="ECO:0007669"/>
    <property type="project" value="UniProtKB-UniRule"/>
</dbReference>
<dbReference type="GO" id="GO:0016260">
    <property type="term" value="P:selenocysteine biosynthetic process"/>
    <property type="evidence" value="ECO:0007669"/>
    <property type="project" value="UniProtKB-UniRule"/>
</dbReference>
<dbReference type="GO" id="GO:0006434">
    <property type="term" value="P:seryl-tRNA aminoacylation"/>
    <property type="evidence" value="ECO:0007669"/>
    <property type="project" value="UniProtKB-UniRule"/>
</dbReference>
<dbReference type="CDD" id="cd00770">
    <property type="entry name" value="SerRS_core"/>
    <property type="match status" value="1"/>
</dbReference>
<dbReference type="FunFam" id="1.10.287.40:FF:000004">
    <property type="entry name" value="Serine--tRNA ligase"/>
    <property type="match status" value="1"/>
</dbReference>
<dbReference type="FunFam" id="3.30.930.10:FF:000048">
    <property type="entry name" value="Serine--tRNA ligase"/>
    <property type="match status" value="1"/>
</dbReference>
<dbReference type="Gene3D" id="3.30.930.10">
    <property type="entry name" value="Bira Bifunctional Protein, Domain 2"/>
    <property type="match status" value="1"/>
</dbReference>
<dbReference type="Gene3D" id="1.10.287.40">
    <property type="entry name" value="Serine-tRNA synthetase, tRNA binding domain"/>
    <property type="match status" value="1"/>
</dbReference>
<dbReference type="HAMAP" id="MF_00176">
    <property type="entry name" value="Ser_tRNA_synth_type1"/>
    <property type="match status" value="1"/>
</dbReference>
<dbReference type="InterPro" id="IPR002314">
    <property type="entry name" value="aa-tRNA-synt_IIb"/>
</dbReference>
<dbReference type="InterPro" id="IPR006195">
    <property type="entry name" value="aa-tRNA-synth_II"/>
</dbReference>
<dbReference type="InterPro" id="IPR045864">
    <property type="entry name" value="aa-tRNA-synth_II/BPL/LPL"/>
</dbReference>
<dbReference type="InterPro" id="IPR002317">
    <property type="entry name" value="Ser-tRNA-ligase_type_1"/>
</dbReference>
<dbReference type="InterPro" id="IPR015866">
    <property type="entry name" value="Ser-tRNA-synth_1_N"/>
</dbReference>
<dbReference type="InterPro" id="IPR042103">
    <property type="entry name" value="SerRS_1_N_sf"/>
</dbReference>
<dbReference type="InterPro" id="IPR033729">
    <property type="entry name" value="SerRS_core"/>
</dbReference>
<dbReference type="InterPro" id="IPR010978">
    <property type="entry name" value="tRNA-bd_arm"/>
</dbReference>
<dbReference type="NCBIfam" id="TIGR00414">
    <property type="entry name" value="serS"/>
    <property type="match status" value="1"/>
</dbReference>
<dbReference type="PANTHER" id="PTHR11778">
    <property type="entry name" value="SERYL-TRNA SYNTHETASE"/>
    <property type="match status" value="1"/>
</dbReference>
<dbReference type="Pfam" id="PF02403">
    <property type="entry name" value="Seryl_tRNA_N"/>
    <property type="match status" value="1"/>
</dbReference>
<dbReference type="Pfam" id="PF00587">
    <property type="entry name" value="tRNA-synt_2b"/>
    <property type="match status" value="1"/>
</dbReference>
<dbReference type="PIRSF" id="PIRSF001529">
    <property type="entry name" value="Ser-tRNA-synth_IIa"/>
    <property type="match status" value="1"/>
</dbReference>
<dbReference type="PRINTS" id="PR00981">
    <property type="entry name" value="TRNASYNTHSER"/>
</dbReference>
<dbReference type="SUPFAM" id="SSF55681">
    <property type="entry name" value="Class II aaRS and biotin synthetases"/>
    <property type="match status" value="1"/>
</dbReference>
<dbReference type="SUPFAM" id="SSF46589">
    <property type="entry name" value="tRNA-binding arm"/>
    <property type="match status" value="1"/>
</dbReference>
<dbReference type="PROSITE" id="PS50862">
    <property type="entry name" value="AA_TRNA_LIGASE_II"/>
    <property type="match status" value="1"/>
</dbReference>